<organism>
    <name type="scientific">Aeropyrum pernix (strain ATCC 700893 / DSM 11879 / JCM 9820 / NBRC 100138 / K1)</name>
    <dbReference type="NCBI Taxonomy" id="272557"/>
    <lineage>
        <taxon>Archaea</taxon>
        <taxon>Thermoproteota</taxon>
        <taxon>Thermoprotei</taxon>
        <taxon>Desulfurococcales</taxon>
        <taxon>Desulfurococcaceae</taxon>
        <taxon>Aeropyrum</taxon>
    </lineage>
</organism>
<feature type="chain" id="PRO_0000153013" description="Probable GTP 3',8-cyclase">
    <location>
        <begin position="1"/>
        <end position="355"/>
    </location>
</feature>
<feature type="domain" description="Radical SAM core" evidence="2">
    <location>
        <begin position="5"/>
        <end position="233"/>
    </location>
</feature>
<feature type="binding site" evidence="1">
    <location>
        <position position="14"/>
    </location>
    <ligand>
        <name>GTP</name>
        <dbReference type="ChEBI" id="CHEBI:37565"/>
    </ligand>
</feature>
<feature type="binding site" evidence="1">
    <location>
        <position position="21"/>
    </location>
    <ligand>
        <name>[4Fe-4S] cluster</name>
        <dbReference type="ChEBI" id="CHEBI:49883"/>
        <label>1</label>
        <note>4Fe-4S-S-AdoMet</note>
    </ligand>
</feature>
<feature type="binding site" evidence="1">
    <location>
        <position position="25"/>
    </location>
    <ligand>
        <name>[4Fe-4S] cluster</name>
        <dbReference type="ChEBI" id="CHEBI:49883"/>
        <label>1</label>
        <note>4Fe-4S-S-AdoMet</note>
    </ligand>
</feature>
<feature type="binding site" evidence="1">
    <location>
        <position position="28"/>
    </location>
    <ligand>
        <name>[4Fe-4S] cluster</name>
        <dbReference type="ChEBI" id="CHEBI:49883"/>
        <label>1</label>
        <note>4Fe-4S-S-AdoMet</note>
    </ligand>
</feature>
<feature type="binding site" evidence="1">
    <location>
        <position position="69"/>
    </location>
    <ligand>
        <name>GTP</name>
        <dbReference type="ChEBI" id="CHEBI:37565"/>
    </ligand>
</feature>
<feature type="binding site" evidence="1">
    <location>
        <position position="73"/>
    </location>
    <ligand>
        <name>S-adenosyl-L-methionine</name>
        <dbReference type="ChEBI" id="CHEBI:59789"/>
    </ligand>
</feature>
<feature type="binding site" evidence="1">
    <location>
        <position position="97"/>
    </location>
    <ligand>
        <name>GTP</name>
        <dbReference type="ChEBI" id="CHEBI:37565"/>
    </ligand>
</feature>
<feature type="binding site" evidence="1">
    <location>
        <position position="121"/>
    </location>
    <ligand>
        <name>S-adenosyl-L-methionine</name>
        <dbReference type="ChEBI" id="CHEBI:59789"/>
    </ligand>
</feature>
<feature type="binding site" evidence="1">
    <location>
        <position position="157"/>
    </location>
    <ligand>
        <name>GTP</name>
        <dbReference type="ChEBI" id="CHEBI:37565"/>
    </ligand>
</feature>
<feature type="binding site" evidence="1">
    <location>
        <position position="252"/>
    </location>
    <ligand>
        <name>[4Fe-4S] cluster</name>
        <dbReference type="ChEBI" id="CHEBI:49883"/>
        <label>2</label>
        <note>4Fe-4S-substrate</note>
    </ligand>
</feature>
<feature type="binding site" evidence="1">
    <location>
        <position position="255"/>
    </location>
    <ligand>
        <name>[4Fe-4S] cluster</name>
        <dbReference type="ChEBI" id="CHEBI:49883"/>
        <label>2</label>
        <note>4Fe-4S-substrate</note>
    </ligand>
</feature>
<feature type="binding site" evidence="1">
    <location>
        <begin position="257"/>
        <end position="259"/>
    </location>
    <ligand>
        <name>GTP</name>
        <dbReference type="ChEBI" id="CHEBI:37565"/>
    </ligand>
</feature>
<feature type="binding site" evidence="1">
    <location>
        <position position="269"/>
    </location>
    <ligand>
        <name>[4Fe-4S] cluster</name>
        <dbReference type="ChEBI" id="CHEBI:49883"/>
        <label>2</label>
        <note>4Fe-4S-substrate</note>
    </ligand>
</feature>
<evidence type="ECO:0000255" key="1">
    <source>
        <dbReference type="HAMAP-Rule" id="MF_01225"/>
    </source>
</evidence>
<evidence type="ECO:0000255" key="2">
    <source>
        <dbReference type="PROSITE-ProRule" id="PRU01266"/>
    </source>
</evidence>
<evidence type="ECO:0000305" key="3"/>
<keyword id="KW-0004">4Fe-4S</keyword>
<keyword id="KW-0342">GTP-binding</keyword>
<keyword id="KW-0408">Iron</keyword>
<keyword id="KW-0411">Iron-sulfur</keyword>
<keyword id="KW-0456">Lyase</keyword>
<keyword id="KW-0479">Metal-binding</keyword>
<keyword id="KW-0501">Molybdenum cofactor biosynthesis</keyword>
<keyword id="KW-0547">Nucleotide-binding</keyword>
<keyword id="KW-1185">Reference proteome</keyword>
<keyword id="KW-0949">S-adenosyl-L-methionine</keyword>
<accession>Q9YEV3</accession>
<gene>
    <name evidence="1" type="primary">moaA</name>
    <name type="ordered locus">APE_0478.1</name>
</gene>
<sequence length="355" mass="39488">MVADAYGRPLKDLRIAVTPECNLDCFFCHMEGATESGPMRPGSWSPVLSVEDYDIIGEAASRLGVDSFKLTGGEPLIRGDVDKIVAVLARYGEVSMTTNGILLPLKASSLKRAGLARVNVSLHSISEEVYEKITRRRAVKLALKGVEAALKAGLRVKVNMVLLRGLNEGEFWRLLRLAEDLGFDLQVIEVHPAGRGRKVLSSFRRPIDVVEERLSSMAVAVETGRLHNRRVYRLPSGVRVYLVDPVENPVFCMGCYRVRLTWDGRLLPCIYWKGPYPSVAEALKRGGSREEKVWRVMKILLEANALRRPTYLFRLHDGQEPQAPSTGRGLRLTLPGKAKAERLAYSTLKAPLIEG</sequence>
<name>MOAA_AERPE</name>
<dbReference type="EC" id="4.1.99.22" evidence="1"/>
<dbReference type="EMBL" id="BA000002">
    <property type="protein sequence ID" value="BAA79443.2"/>
    <property type="status" value="ALT_INIT"/>
    <property type="molecule type" value="Genomic_DNA"/>
</dbReference>
<dbReference type="PIR" id="G72743">
    <property type="entry name" value="G72743"/>
</dbReference>
<dbReference type="SMR" id="Q9YEV3"/>
<dbReference type="STRING" id="272557.APE_0478.1"/>
<dbReference type="EnsemblBacteria" id="BAA79443">
    <property type="protein sequence ID" value="BAA79443"/>
    <property type="gene ID" value="APE_0478.1"/>
</dbReference>
<dbReference type="KEGG" id="ape:APE_0478.1"/>
<dbReference type="PATRIC" id="fig|272557.25.peg.366"/>
<dbReference type="eggNOG" id="arCOG00930">
    <property type="taxonomic scope" value="Archaea"/>
</dbReference>
<dbReference type="UniPathway" id="UPA00344"/>
<dbReference type="Proteomes" id="UP000002518">
    <property type="component" value="Chromosome"/>
</dbReference>
<dbReference type="GO" id="GO:0051539">
    <property type="term" value="F:4 iron, 4 sulfur cluster binding"/>
    <property type="evidence" value="ECO:0007669"/>
    <property type="project" value="UniProtKB-UniRule"/>
</dbReference>
<dbReference type="GO" id="GO:0061799">
    <property type="term" value="F:cyclic pyranopterin monophosphate synthase activity"/>
    <property type="evidence" value="ECO:0007669"/>
    <property type="project" value="TreeGrafter"/>
</dbReference>
<dbReference type="GO" id="GO:0061798">
    <property type="term" value="F:GTP 3',8'-cyclase activity"/>
    <property type="evidence" value="ECO:0007669"/>
    <property type="project" value="UniProtKB-UniRule"/>
</dbReference>
<dbReference type="GO" id="GO:0005525">
    <property type="term" value="F:GTP binding"/>
    <property type="evidence" value="ECO:0007669"/>
    <property type="project" value="UniProtKB-UniRule"/>
</dbReference>
<dbReference type="GO" id="GO:0046872">
    <property type="term" value="F:metal ion binding"/>
    <property type="evidence" value="ECO:0007669"/>
    <property type="project" value="UniProtKB-KW"/>
</dbReference>
<dbReference type="GO" id="GO:1904047">
    <property type="term" value="F:S-adenosyl-L-methionine binding"/>
    <property type="evidence" value="ECO:0007669"/>
    <property type="project" value="UniProtKB-UniRule"/>
</dbReference>
<dbReference type="GO" id="GO:0006777">
    <property type="term" value="P:Mo-molybdopterin cofactor biosynthetic process"/>
    <property type="evidence" value="ECO:0007669"/>
    <property type="project" value="UniProtKB-UniRule"/>
</dbReference>
<dbReference type="CDD" id="cd01335">
    <property type="entry name" value="Radical_SAM"/>
    <property type="match status" value="1"/>
</dbReference>
<dbReference type="Gene3D" id="3.20.20.70">
    <property type="entry name" value="Aldolase class I"/>
    <property type="match status" value="1"/>
</dbReference>
<dbReference type="HAMAP" id="MF_01225_A">
    <property type="entry name" value="MoaA_A"/>
    <property type="match status" value="1"/>
</dbReference>
<dbReference type="InterPro" id="IPR013785">
    <property type="entry name" value="Aldolase_TIM"/>
</dbReference>
<dbReference type="InterPro" id="IPR006638">
    <property type="entry name" value="Elp3/MiaA/NifB-like_rSAM"/>
</dbReference>
<dbReference type="InterPro" id="IPR013485">
    <property type="entry name" value="MoaA_arc"/>
</dbReference>
<dbReference type="InterPro" id="IPR000385">
    <property type="entry name" value="MoaA_NifB_PqqE_Fe-S-bd_CS"/>
</dbReference>
<dbReference type="InterPro" id="IPR010505">
    <property type="entry name" value="MoaA_twitch"/>
</dbReference>
<dbReference type="InterPro" id="IPR050105">
    <property type="entry name" value="MoCo_biosynth_MoaA/MoaC"/>
</dbReference>
<dbReference type="InterPro" id="IPR007197">
    <property type="entry name" value="rSAM"/>
</dbReference>
<dbReference type="NCBIfam" id="TIGR02668">
    <property type="entry name" value="moaA_archaeal"/>
    <property type="match status" value="1"/>
</dbReference>
<dbReference type="NCBIfam" id="NF001199">
    <property type="entry name" value="PRK00164.2-1"/>
    <property type="match status" value="1"/>
</dbReference>
<dbReference type="PANTHER" id="PTHR22960:SF0">
    <property type="entry name" value="MOLYBDENUM COFACTOR BIOSYNTHESIS PROTEIN 1"/>
    <property type="match status" value="1"/>
</dbReference>
<dbReference type="PANTHER" id="PTHR22960">
    <property type="entry name" value="MOLYBDOPTERIN COFACTOR SYNTHESIS PROTEIN A"/>
    <property type="match status" value="1"/>
</dbReference>
<dbReference type="Pfam" id="PF06463">
    <property type="entry name" value="Mob_synth_C"/>
    <property type="match status" value="1"/>
</dbReference>
<dbReference type="Pfam" id="PF04055">
    <property type="entry name" value="Radical_SAM"/>
    <property type="match status" value="1"/>
</dbReference>
<dbReference type="SFLD" id="SFLDG01383">
    <property type="entry name" value="cyclic_pyranopterin_phosphate"/>
    <property type="match status" value="1"/>
</dbReference>
<dbReference type="SFLD" id="SFLDG01072">
    <property type="entry name" value="dehydrogenase_like"/>
    <property type="match status" value="1"/>
</dbReference>
<dbReference type="SMART" id="SM00729">
    <property type="entry name" value="Elp3"/>
    <property type="match status" value="1"/>
</dbReference>
<dbReference type="SUPFAM" id="SSF102114">
    <property type="entry name" value="Radical SAM enzymes"/>
    <property type="match status" value="1"/>
</dbReference>
<dbReference type="PROSITE" id="PS01305">
    <property type="entry name" value="MOAA_NIFB_PQQE"/>
    <property type="match status" value="1"/>
</dbReference>
<dbReference type="PROSITE" id="PS51918">
    <property type="entry name" value="RADICAL_SAM"/>
    <property type="match status" value="1"/>
</dbReference>
<protein>
    <recommendedName>
        <fullName evidence="1">Probable GTP 3',8-cyclase</fullName>
        <ecNumber evidence="1">4.1.99.22</ecNumber>
    </recommendedName>
    <alternativeName>
        <fullName evidence="1">Molybdenum cofactor biosynthesis protein A</fullName>
    </alternativeName>
</protein>
<proteinExistence type="inferred from homology"/>
<reference key="1">
    <citation type="journal article" date="1999" name="DNA Res.">
        <title>Complete genome sequence of an aerobic hyper-thermophilic crenarchaeon, Aeropyrum pernix K1.</title>
        <authorList>
            <person name="Kawarabayasi Y."/>
            <person name="Hino Y."/>
            <person name="Horikawa H."/>
            <person name="Yamazaki S."/>
            <person name="Haikawa Y."/>
            <person name="Jin-no K."/>
            <person name="Takahashi M."/>
            <person name="Sekine M."/>
            <person name="Baba S."/>
            <person name="Ankai A."/>
            <person name="Kosugi H."/>
            <person name="Hosoyama A."/>
            <person name="Fukui S."/>
            <person name="Nagai Y."/>
            <person name="Nishijima K."/>
            <person name="Nakazawa H."/>
            <person name="Takamiya M."/>
            <person name="Masuda S."/>
            <person name="Funahashi T."/>
            <person name="Tanaka T."/>
            <person name="Kudoh Y."/>
            <person name="Yamazaki J."/>
            <person name="Kushida N."/>
            <person name="Oguchi A."/>
            <person name="Aoki K."/>
            <person name="Kubota K."/>
            <person name="Nakamura Y."/>
            <person name="Nomura N."/>
            <person name="Sako Y."/>
            <person name="Kikuchi H."/>
        </authorList>
    </citation>
    <scope>NUCLEOTIDE SEQUENCE [LARGE SCALE GENOMIC DNA]</scope>
    <source>
        <strain>ATCC 700893 / DSM 11879 / JCM 9820 / NBRC 100138 / K1</strain>
    </source>
</reference>
<comment type="function">
    <text evidence="1">Catalyzes the cyclization of GTP to (8S)-3',8-cyclo-7,8-dihydroguanosine 5'-triphosphate.</text>
</comment>
<comment type="catalytic activity">
    <reaction evidence="1">
        <text>GTP + AH2 + S-adenosyl-L-methionine = (8S)-3',8-cyclo-7,8-dihydroguanosine 5'-triphosphate + 5'-deoxyadenosine + L-methionine + A + H(+)</text>
        <dbReference type="Rhea" id="RHEA:49576"/>
        <dbReference type="ChEBI" id="CHEBI:13193"/>
        <dbReference type="ChEBI" id="CHEBI:15378"/>
        <dbReference type="ChEBI" id="CHEBI:17319"/>
        <dbReference type="ChEBI" id="CHEBI:17499"/>
        <dbReference type="ChEBI" id="CHEBI:37565"/>
        <dbReference type="ChEBI" id="CHEBI:57844"/>
        <dbReference type="ChEBI" id="CHEBI:59789"/>
        <dbReference type="ChEBI" id="CHEBI:131766"/>
        <dbReference type="EC" id="4.1.99.22"/>
    </reaction>
</comment>
<comment type="cofactor">
    <cofactor evidence="1">
        <name>[4Fe-4S] cluster</name>
        <dbReference type="ChEBI" id="CHEBI:49883"/>
    </cofactor>
    <text evidence="1">Binds 2 [4Fe-4S] clusters. Binds 1 [4Fe-4S] cluster coordinated with 3 cysteines and an exchangeable S-adenosyl-L-methionine and 1 [4Fe-4S] cluster coordinated with 3 cysteines and the GTP-derived substrate.</text>
</comment>
<comment type="pathway">
    <text evidence="1">Cofactor biosynthesis; molybdopterin biosynthesis.</text>
</comment>
<comment type="similarity">
    <text evidence="1">Belongs to the radical SAM superfamily. MoaA family.</text>
</comment>
<comment type="sequence caution" evidence="3">
    <conflict type="erroneous initiation">
        <sequence resource="EMBL-CDS" id="BAA79443"/>
    </conflict>
</comment>